<keyword id="KW-0456">Lyase</keyword>
<keyword id="KW-0472">Membrane</keyword>
<keyword id="KW-0479">Metal-binding</keyword>
<keyword id="KW-0496">Mitochondrion</keyword>
<keyword id="KW-0999">Mitochondrion inner membrane</keyword>
<keyword id="KW-1185">Reference proteome</keyword>
<keyword id="KW-0831">Ubiquinone biosynthesis</keyword>
<keyword id="KW-0862">Zinc</keyword>
<dbReference type="EC" id="4.1.1.130" evidence="1"/>
<dbReference type="EMBL" id="CH464491">
    <property type="protein sequence ID" value="EAN80302.1"/>
    <property type="status" value="ALT_INIT"/>
    <property type="molecule type" value="Genomic_DNA"/>
</dbReference>
<dbReference type="RefSeq" id="XP_829414.1">
    <property type="nucleotide sequence ID" value="XM_824321.1"/>
</dbReference>
<dbReference type="SMR" id="Q382H9"/>
<dbReference type="FunCoup" id="Q382H9">
    <property type="interactions" value="171"/>
</dbReference>
<dbReference type="STRING" id="185431.Q382H9"/>
<dbReference type="PaxDb" id="5691-EAN80302"/>
<dbReference type="GeneID" id="3665791"/>
<dbReference type="KEGG" id="tbr:Tb11.01.5180"/>
<dbReference type="VEuPathDB" id="TriTrypDB:Tb927.11.13580"/>
<dbReference type="eggNOG" id="KOG3244">
    <property type="taxonomic scope" value="Eukaryota"/>
</dbReference>
<dbReference type="InParanoid" id="Q382H9"/>
<dbReference type="OrthoDB" id="4249at2759"/>
<dbReference type="UniPathway" id="UPA00232"/>
<dbReference type="Proteomes" id="UP000008524">
    <property type="component" value="Chromosome 11 Scaffold 1"/>
</dbReference>
<dbReference type="GO" id="GO:0031314">
    <property type="term" value="C:extrinsic component of mitochondrial inner membrane"/>
    <property type="evidence" value="ECO:0007669"/>
    <property type="project" value="UniProtKB-UniRule"/>
</dbReference>
<dbReference type="GO" id="GO:0020023">
    <property type="term" value="C:kinetoplast"/>
    <property type="evidence" value="ECO:0000314"/>
    <property type="project" value="GeneDB"/>
</dbReference>
<dbReference type="GO" id="GO:0005739">
    <property type="term" value="C:mitochondrion"/>
    <property type="evidence" value="ECO:0000314"/>
    <property type="project" value="GeneDB"/>
</dbReference>
<dbReference type="GO" id="GO:0006744">
    <property type="term" value="P:ubiquinone biosynthetic process"/>
    <property type="evidence" value="ECO:0000247"/>
    <property type="project" value="GeneDB"/>
</dbReference>
<dbReference type="HAMAP" id="MF_03111">
    <property type="entry name" value="Coq4"/>
    <property type="match status" value="1"/>
</dbReference>
<dbReference type="InterPro" id="IPR007715">
    <property type="entry name" value="Coq4"/>
</dbReference>
<dbReference type="InterPro" id="IPR027540">
    <property type="entry name" value="Coq4_euk"/>
</dbReference>
<dbReference type="PANTHER" id="PTHR12922">
    <property type="entry name" value="UBIQUINONE BIOSYNTHESIS PROTEIN"/>
    <property type="match status" value="1"/>
</dbReference>
<dbReference type="PANTHER" id="PTHR12922:SF7">
    <property type="entry name" value="UBIQUINONE BIOSYNTHESIS PROTEIN COQ4 HOMOLOG, MITOCHONDRIAL"/>
    <property type="match status" value="1"/>
</dbReference>
<dbReference type="Pfam" id="PF05019">
    <property type="entry name" value="Coq4"/>
    <property type="match status" value="1"/>
</dbReference>
<name>COQ4_TRYB2</name>
<evidence type="ECO:0000255" key="1">
    <source>
        <dbReference type="HAMAP-Rule" id="MF_03111"/>
    </source>
</evidence>
<evidence type="ECO:0000305" key="2"/>
<evidence type="ECO:0000312" key="3">
    <source>
        <dbReference type="Proteomes" id="UP000008524"/>
    </source>
</evidence>
<proteinExistence type="inferred from homology"/>
<feature type="chain" id="PRO_0000388086" description="Ubiquinone biosynthesis protein COQ4 homolog, mitochondrial">
    <location>
        <begin position="1"/>
        <end position="249"/>
    </location>
</feature>
<feature type="binding site" evidence="1">
    <location>
        <position position="134"/>
    </location>
    <ligand>
        <name>Zn(2+)</name>
        <dbReference type="ChEBI" id="CHEBI:29105"/>
    </ligand>
</feature>
<feature type="binding site" evidence="1">
    <location>
        <position position="135"/>
    </location>
    <ligand>
        <name>Zn(2+)</name>
        <dbReference type="ChEBI" id="CHEBI:29105"/>
    </ligand>
</feature>
<feature type="binding site" evidence="1">
    <location>
        <position position="138"/>
    </location>
    <ligand>
        <name>Zn(2+)</name>
        <dbReference type="ChEBI" id="CHEBI:29105"/>
    </ligand>
</feature>
<feature type="binding site" evidence="1">
    <location>
        <position position="150"/>
    </location>
    <ligand>
        <name>Zn(2+)</name>
        <dbReference type="ChEBI" id="CHEBI:29105"/>
    </ligand>
</feature>
<gene>
    <name type="ORF">Tb11.01.5180</name>
</gene>
<reference key="1">
    <citation type="journal article" date="2005" name="Science">
        <title>The genome of the African trypanosome Trypanosoma brucei.</title>
        <authorList>
            <person name="Berriman M."/>
            <person name="Ghedin E."/>
            <person name="Hertz-Fowler C."/>
            <person name="Blandin G."/>
            <person name="Renauld H."/>
            <person name="Bartholomeu D.C."/>
            <person name="Lennard N.J."/>
            <person name="Caler E."/>
            <person name="Hamlin N.E."/>
            <person name="Haas B."/>
            <person name="Bohme U."/>
            <person name="Hannick L."/>
            <person name="Aslett M.A."/>
            <person name="Shallom J."/>
            <person name="Marcello L."/>
            <person name="Hou L."/>
            <person name="Wickstead B."/>
            <person name="Alsmark U.C.M."/>
            <person name="Arrowsmith C."/>
            <person name="Atkin R.J."/>
            <person name="Barron A.J."/>
            <person name="Bringaud F."/>
            <person name="Brooks K."/>
            <person name="Carrington M."/>
            <person name="Cherevach I."/>
            <person name="Chillingworth T.J."/>
            <person name="Churcher C."/>
            <person name="Clark L.N."/>
            <person name="Corton C.H."/>
            <person name="Cronin A."/>
            <person name="Davies R.M."/>
            <person name="Doggett J."/>
            <person name="Djikeng A."/>
            <person name="Feldblyum T."/>
            <person name="Field M.C."/>
            <person name="Fraser A."/>
            <person name="Goodhead I."/>
            <person name="Hance Z."/>
            <person name="Harper D."/>
            <person name="Harris B.R."/>
            <person name="Hauser H."/>
            <person name="Hostetler J."/>
            <person name="Ivens A."/>
            <person name="Jagels K."/>
            <person name="Johnson D."/>
            <person name="Johnson J."/>
            <person name="Jones K."/>
            <person name="Kerhornou A.X."/>
            <person name="Koo H."/>
            <person name="Larke N."/>
            <person name="Landfear S."/>
            <person name="Larkin C."/>
            <person name="Leech V."/>
            <person name="Line A."/>
            <person name="Lord A."/>
            <person name="Macleod A."/>
            <person name="Mooney P.J."/>
            <person name="Moule S."/>
            <person name="Martin D.M."/>
            <person name="Morgan G.W."/>
            <person name="Mungall K."/>
            <person name="Norbertczak H."/>
            <person name="Ormond D."/>
            <person name="Pai G."/>
            <person name="Peacock C.S."/>
            <person name="Peterson J."/>
            <person name="Quail M.A."/>
            <person name="Rabbinowitsch E."/>
            <person name="Rajandream M.A."/>
            <person name="Reitter C."/>
            <person name="Salzberg S.L."/>
            <person name="Sanders M."/>
            <person name="Schobel S."/>
            <person name="Sharp S."/>
            <person name="Simmonds M."/>
            <person name="Simpson A.J."/>
            <person name="Tallon L."/>
            <person name="Turner C.M."/>
            <person name="Tait A."/>
            <person name="Tivey A.R."/>
            <person name="Van Aken S."/>
            <person name="Walker D."/>
            <person name="Wanless D."/>
            <person name="Wang S."/>
            <person name="White B."/>
            <person name="White O."/>
            <person name="Whitehead S."/>
            <person name="Woodward J."/>
            <person name="Wortman J."/>
            <person name="Adams M.D."/>
            <person name="Embley T.M."/>
            <person name="Gull K."/>
            <person name="Ullu E."/>
            <person name="Barry J.D."/>
            <person name="Fairlamb A.H."/>
            <person name="Opperdoes F."/>
            <person name="Barrell B.G."/>
            <person name="Donelson J.E."/>
            <person name="Hall N."/>
            <person name="Fraser C.M."/>
            <person name="Melville S.E."/>
            <person name="El-Sayed N.M.A."/>
        </authorList>
    </citation>
    <scope>NUCLEOTIDE SEQUENCE [LARGE SCALE GENOMIC DNA]</scope>
    <source>
        <strain evidence="3">927/4 GUTat10.1</strain>
    </source>
</reference>
<sequence>MQSRVVSSAVMFLGGIAGAVKSLPAFVTSSFGAIVDPEDGRGSAAFAEITALTALHHMQRLMMADEMGRSILKERPQVTDETLEFAKTQPEGTFGYRYAAFMKRNNFLPSGRAPILHVSDPTLAYVMLRYRQIHDFVHAYVGLGRTIEEELAVKLFEWQHTGLPVGLMAVLGGMPWLRMDQILNMGMYNEWARANAPRQLHGKRFVSCILNVPWEWYLDKPYEQLVDDVGIVPLDAFLKERKSGGLHDS</sequence>
<organism>
    <name type="scientific">Trypanosoma brucei brucei (strain 927/4 GUTat10.1)</name>
    <dbReference type="NCBI Taxonomy" id="185431"/>
    <lineage>
        <taxon>Eukaryota</taxon>
        <taxon>Discoba</taxon>
        <taxon>Euglenozoa</taxon>
        <taxon>Kinetoplastea</taxon>
        <taxon>Metakinetoplastina</taxon>
        <taxon>Trypanosomatida</taxon>
        <taxon>Trypanosomatidae</taxon>
        <taxon>Trypanosoma</taxon>
    </lineage>
</organism>
<comment type="function">
    <text evidence="1">Lyase that catalyzes the C1-decarboxylation of 4-hydroxy-3-methoxy-5-(all-trans-polyprenyl)benzoic acid into 2-methoxy-6-(all-trans-polyprenyl)phenol during ubiquinone biosynthesis.</text>
</comment>
<comment type="catalytic activity">
    <reaction evidence="1">
        <text>a 4-hydroxy-3-methoxy-5-(all-trans-polyprenyl)benzoate + H(+) = a 2-methoxy-6-(all-trans-polyprenyl)phenol + CO2</text>
        <dbReference type="Rhea" id="RHEA:81179"/>
        <dbReference type="Rhea" id="RHEA-COMP:9551"/>
        <dbReference type="Rhea" id="RHEA-COMP:10931"/>
        <dbReference type="ChEBI" id="CHEBI:15378"/>
        <dbReference type="ChEBI" id="CHEBI:16526"/>
        <dbReference type="ChEBI" id="CHEBI:62731"/>
        <dbReference type="ChEBI" id="CHEBI:84443"/>
        <dbReference type="EC" id="4.1.1.130"/>
    </reaction>
</comment>
<comment type="cofactor">
    <cofactor evidence="1">
        <name>Zn(2+)</name>
        <dbReference type="ChEBI" id="CHEBI:29105"/>
    </cofactor>
</comment>
<comment type="pathway">
    <text evidence="1">Cofactor biosynthesis; ubiquinone biosynthesis.</text>
</comment>
<comment type="subunit">
    <text evidence="1">Component of a multi-subunit COQ enzyme complex.</text>
</comment>
<comment type="subcellular location">
    <subcellularLocation>
        <location evidence="1">Mitochondrion inner membrane</location>
        <topology evidence="1">Peripheral membrane protein</topology>
        <orientation evidence="1">Matrix side</orientation>
    </subcellularLocation>
</comment>
<comment type="miscellaneous">
    <text evidence="1">This protein may be expected to contain an N-terminal transit peptide but none has been predicted.</text>
</comment>
<comment type="similarity">
    <text evidence="1">Belongs to the COQ4 family.</text>
</comment>
<comment type="sequence caution" evidence="2">
    <conflict type="erroneous initiation">
        <sequence resource="EMBL-CDS" id="EAN80302"/>
    </conflict>
</comment>
<accession>Q382H9</accession>
<protein>
    <recommendedName>
        <fullName evidence="1">Ubiquinone biosynthesis protein COQ4 homolog, mitochondrial</fullName>
    </recommendedName>
    <alternativeName>
        <fullName>4-hydroxy-3-methoxy-5-polyprenylbenzoate decarboxylase</fullName>
        <ecNumber evidence="1">4.1.1.130</ecNumber>
    </alternativeName>
    <alternativeName>
        <fullName evidence="1">Coenzyme Q biosynthesis protein 4 homolog</fullName>
    </alternativeName>
</protein>